<reference key="1">
    <citation type="journal article" date="2001" name="Lancet">
        <title>Whole genome sequencing of meticillin-resistant Staphylococcus aureus.</title>
        <authorList>
            <person name="Kuroda M."/>
            <person name="Ohta T."/>
            <person name="Uchiyama I."/>
            <person name="Baba T."/>
            <person name="Yuzawa H."/>
            <person name="Kobayashi I."/>
            <person name="Cui L."/>
            <person name="Oguchi A."/>
            <person name="Aoki K."/>
            <person name="Nagai Y."/>
            <person name="Lian J.-Q."/>
            <person name="Ito T."/>
            <person name="Kanamori M."/>
            <person name="Matsumaru H."/>
            <person name="Maruyama A."/>
            <person name="Murakami H."/>
            <person name="Hosoyama A."/>
            <person name="Mizutani-Ui Y."/>
            <person name="Takahashi N.K."/>
            <person name="Sawano T."/>
            <person name="Inoue R."/>
            <person name="Kaito C."/>
            <person name="Sekimizu K."/>
            <person name="Hirakawa H."/>
            <person name="Kuhara S."/>
            <person name="Goto S."/>
            <person name="Yabuzaki J."/>
            <person name="Kanehisa M."/>
            <person name="Yamashita A."/>
            <person name="Oshima K."/>
            <person name="Furuya K."/>
            <person name="Yoshino C."/>
            <person name="Shiba T."/>
            <person name="Hattori M."/>
            <person name="Ogasawara N."/>
            <person name="Hayashi H."/>
            <person name="Hiramatsu K."/>
        </authorList>
    </citation>
    <scope>NUCLEOTIDE SEQUENCE [LARGE SCALE GENOMIC DNA]</scope>
    <source>
        <strain>Mu50 / ATCC 700699</strain>
    </source>
</reference>
<gene>
    <name type="ordered locus">SAV0099</name>
</gene>
<comment type="subcellular location">
    <subcellularLocation>
        <location evidence="1">Cell membrane</location>
        <topology evidence="1">Lipid-anchor</topology>
    </subcellularLocation>
</comment>
<comment type="similarity">
    <text evidence="2">Belongs to the staphylococcal tandem lipoprotein family.</text>
</comment>
<comment type="sequence caution" evidence="2">
    <conflict type="erroneous initiation">
        <sequence resource="EMBL-CDS" id="BAB56261"/>
    </conflict>
</comment>
<protein>
    <recommendedName>
        <fullName>Uncharacterized lipoprotein SAV0099</fullName>
    </recommendedName>
</protein>
<organism>
    <name type="scientific">Staphylococcus aureus (strain Mu50 / ATCC 700699)</name>
    <dbReference type="NCBI Taxonomy" id="158878"/>
    <lineage>
        <taxon>Bacteria</taxon>
        <taxon>Bacillati</taxon>
        <taxon>Bacillota</taxon>
        <taxon>Bacilli</taxon>
        <taxon>Bacillales</taxon>
        <taxon>Staphylococcaceae</taxon>
        <taxon>Staphylococcus</taxon>
    </lineage>
</organism>
<dbReference type="EMBL" id="BA000017">
    <property type="protein sequence ID" value="BAB56261.1"/>
    <property type="status" value="ALT_INIT"/>
    <property type="molecule type" value="Genomic_DNA"/>
</dbReference>
<dbReference type="SMR" id="Q99XB3"/>
<dbReference type="KEGG" id="sav:SAV0099"/>
<dbReference type="HOGENOM" id="CLU_071589_0_1_9"/>
<dbReference type="Proteomes" id="UP000002481">
    <property type="component" value="Chromosome"/>
</dbReference>
<dbReference type="GO" id="GO:0005886">
    <property type="term" value="C:plasma membrane"/>
    <property type="evidence" value="ECO:0007669"/>
    <property type="project" value="UniProtKB-SubCell"/>
</dbReference>
<dbReference type="Gene3D" id="2.50.20.40">
    <property type="match status" value="1"/>
</dbReference>
<dbReference type="InterPro" id="IPR007595">
    <property type="entry name" value="Csa"/>
</dbReference>
<dbReference type="InterPro" id="IPR038641">
    <property type="entry name" value="Csa_sf"/>
</dbReference>
<dbReference type="NCBIfam" id="TIGR01742">
    <property type="entry name" value="SA_tandem_lipo"/>
    <property type="match status" value="1"/>
</dbReference>
<dbReference type="Pfam" id="PF04507">
    <property type="entry name" value="DUF576"/>
    <property type="match status" value="1"/>
</dbReference>
<dbReference type="PROSITE" id="PS51257">
    <property type="entry name" value="PROKAR_LIPOPROTEIN"/>
    <property type="match status" value="1"/>
</dbReference>
<proteinExistence type="inferred from homology"/>
<accession>Q99XB3</accession>
<feature type="signal peptide" evidence="1">
    <location>
        <begin position="1"/>
        <end position="23"/>
    </location>
</feature>
<feature type="chain" id="PRO_0000282116" description="Uncharacterized lipoprotein SAV0099">
    <location>
        <begin position="24"/>
        <end position="255"/>
    </location>
</feature>
<feature type="lipid moiety-binding region" description="N-palmitoyl cysteine" evidence="1">
    <location>
        <position position="24"/>
    </location>
</feature>
<feature type="lipid moiety-binding region" description="S-diacylglycerol cysteine" evidence="1">
    <location>
        <position position="24"/>
    </location>
</feature>
<evidence type="ECO:0000255" key="1">
    <source>
        <dbReference type="PROSITE-ProRule" id="PRU00303"/>
    </source>
</evidence>
<evidence type="ECO:0000305" key="2"/>
<sequence>MKRLNKLVLGISFLFLVISITAGCGMGKEAEIKKSFEKTMSMYPIKNLEDLYDKEGYRDDQFDKNDKGTWIVNSQMAIQNKGEPMKSKGMVLYMNRNTRTTNGYYYVNVIKGEDKGKHQDNEKRYPVKMVDNKIILTKEIKDENIKIEIENFKFFVQYGNFKDLENYKDGDISYNPEVPSYSAKYQLTNDDYNVKQLRKRYDIPTNKAPKLLLKGTGNLKGSSVGYKDIEFTFVEKKEENIYFSDGLIFKPSEDK</sequence>
<name>Y099_STAAM</name>
<keyword id="KW-1003">Cell membrane</keyword>
<keyword id="KW-0449">Lipoprotein</keyword>
<keyword id="KW-0472">Membrane</keyword>
<keyword id="KW-0564">Palmitate</keyword>
<keyword id="KW-0732">Signal</keyword>